<keyword id="KW-0378">Hydrolase</keyword>
<keyword id="KW-0460">Magnesium</keyword>
<keyword id="KW-0479">Metal-binding</keyword>
<feature type="chain" id="PRO_1000087828" description="Nucleoside triphosphate/diphosphate phosphatase">
    <location>
        <begin position="1"/>
        <end position="180"/>
    </location>
</feature>
<feature type="active site" description="Proton donor" evidence="1">
    <location>
        <position position="26"/>
    </location>
</feature>
<feature type="binding site" evidence="1">
    <location>
        <position position="90"/>
    </location>
    <ligand>
        <name>Mg(2+)</name>
        <dbReference type="ChEBI" id="CHEBI:18420"/>
        <label>1</label>
    </ligand>
</feature>
<feature type="binding site" evidence="1">
    <location>
        <position position="106"/>
    </location>
    <ligand>
        <name>Mg(2+)</name>
        <dbReference type="ChEBI" id="CHEBI:18420"/>
        <label>1</label>
    </ligand>
</feature>
<feature type="binding site" evidence="1">
    <location>
        <position position="108"/>
    </location>
    <ligand>
        <name>Mg(2+)</name>
        <dbReference type="ChEBI" id="CHEBI:18420"/>
        <label>2</label>
    </ligand>
</feature>
<feature type="binding site" evidence="1">
    <location>
        <position position="110"/>
    </location>
    <ligand>
        <name>Mg(2+)</name>
        <dbReference type="ChEBI" id="CHEBI:18420"/>
        <label>1</label>
    </ligand>
</feature>
<feature type="binding site" evidence="1">
    <location>
        <position position="110"/>
    </location>
    <ligand>
        <name>Mg(2+)</name>
        <dbReference type="ChEBI" id="CHEBI:18420"/>
        <label>2</label>
    </ligand>
</feature>
<feature type="binding site" evidence="1">
    <location>
        <position position="123"/>
    </location>
    <ligand>
        <name>Mg(2+)</name>
        <dbReference type="ChEBI" id="CHEBI:18420"/>
        <label>2</label>
    </ligand>
</feature>
<feature type="binding site" evidence="1">
    <location>
        <position position="126"/>
    </location>
    <ligand>
        <name>Mg(2+)</name>
        <dbReference type="ChEBI" id="CHEBI:18420"/>
        <label>2</label>
    </ligand>
</feature>
<dbReference type="EC" id="3.6.1.15" evidence="1"/>
<dbReference type="EC" id="3.6.1.6" evidence="1"/>
<dbReference type="EMBL" id="CP000736">
    <property type="protein sequence ID" value="ABR52789.1"/>
    <property type="molecule type" value="Genomic_DNA"/>
</dbReference>
<dbReference type="SMR" id="A6U2X1"/>
<dbReference type="KEGG" id="sah:SaurJH1_1955"/>
<dbReference type="HOGENOM" id="CLU_109787_1_0_9"/>
<dbReference type="GO" id="GO:0000287">
    <property type="term" value="F:magnesium ion binding"/>
    <property type="evidence" value="ECO:0007669"/>
    <property type="project" value="UniProtKB-UniRule"/>
</dbReference>
<dbReference type="GO" id="GO:0017110">
    <property type="term" value="F:nucleoside diphosphate phosphatase activity"/>
    <property type="evidence" value="ECO:0007669"/>
    <property type="project" value="UniProtKB-UniRule"/>
</dbReference>
<dbReference type="GO" id="GO:0017111">
    <property type="term" value="F:ribonucleoside triphosphate phosphatase activity"/>
    <property type="evidence" value="ECO:0007669"/>
    <property type="project" value="UniProtKB-UniRule"/>
</dbReference>
<dbReference type="Gene3D" id="2.40.380.10">
    <property type="entry name" value="FomD-like"/>
    <property type="match status" value="1"/>
</dbReference>
<dbReference type="HAMAP" id="MF_01568">
    <property type="entry name" value="Ntdp"/>
    <property type="match status" value="1"/>
</dbReference>
<dbReference type="InterPro" id="IPR007295">
    <property type="entry name" value="DUF402"/>
</dbReference>
<dbReference type="InterPro" id="IPR035930">
    <property type="entry name" value="FomD-like_sf"/>
</dbReference>
<dbReference type="InterPro" id="IPR050212">
    <property type="entry name" value="Ntdp-like"/>
</dbReference>
<dbReference type="InterPro" id="IPR016882">
    <property type="entry name" value="SA1684"/>
</dbReference>
<dbReference type="NCBIfam" id="NF010183">
    <property type="entry name" value="PRK13662.1"/>
    <property type="match status" value="1"/>
</dbReference>
<dbReference type="PANTHER" id="PTHR39159">
    <property type="match status" value="1"/>
</dbReference>
<dbReference type="PANTHER" id="PTHR39159:SF1">
    <property type="entry name" value="UPF0374 PROTEIN YGAC"/>
    <property type="match status" value="1"/>
</dbReference>
<dbReference type="Pfam" id="PF04167">
    <property type="entry name" value="DUF402"/>
    <property type="match status" value="1"/>
</dbReference>
<dbReference type="PIRSF" id="PIRSF028345">
    <property type="entry name" value="UCP028345"/>
    <property type="match status" value="1"/>
</dbReference>
<dbReference type="SUPFAM" id="SSF159234">
    <property type="entry name" value="FomD-like"/>
    <property type="match status" value="1"/>
</dbReference>
<gene>
    <name type="ordered locus">SaurJH1_1955</name>
</gene>
<protein>
    <recommendedName>
        <fullName evidence="1">Nucleoside triphosphate/diphosphate phosphatase</fullName>
        <ecNumber evidence="1">3.6.1.15</ecNumber>
        <ecNumber evidence="1">3.6.1.6</ecNumber>
    </recommendedName>
</protein>
<proteinExistence type="inferred from homology"/>
<organism>
    <name type="scientific">Staphylococcus aureus (strain JH1)</name>
    <dbReference type="NCBI Taxonomy" id="359787"/>
    <lineage>
        <taxon>Bacteria</taxon>
        <taxon>Bacillati</taxon>
        <taxon>Bacillota</taxon>
        <taxon>Bacilli</taxon>
        <taxon>Bacillales</taxon>
        <taxon>Staphylococcaceae</taxon>
        <taxon>Staphylococcus</taxon>
    </lineage>
</organism>
<name>NTDP_STAA2</name>
<accession>A6U2X1</accession>
<evidence type="ECO:0000255" key="1">
    <source>
        <dbReference type="HAMAP-Rule" id="MF_01568"/>
    </source>
</evidence>
<reference key="1">
    <citation type="submission" date="2007-06" db="EMBL/GenBank/DDBJ databases">
        <title>Complete sequence of chromosome of Staphylococcus aureus subsp. aureus JH1.</title>
        <authorList>
            <consortium name="US DOE Joint Genome Institute"/>
            <person name="Copeland A."/>
            <person name="Lucas S."/>
            <person name="Lapidus A."/>
            <person name="Barry K."/>
            <person name="Detter J.C."/>
            <person name="Glavina del Rio T."/>
            <person name="Hammon N."/>
            <person name="Israni S."/>
            <person name="Dalin E."/>
            <person name="Tice H."/>
            <person name="Pitluck S."/>
            <person name="Chain P."/>
            <person name="Malfatti S."/>
            <person name="Shin M."/>
            <person name="Vergez L."/>
            <person name="Schmutz J."/>
            <person name="Larimer F."/>
            <person name="Land M."/>
            <person name="Hauser L."/>
            <person name="Kyrpides N."/>
            <person name="Ivanova N."/>
            <person name="Tomasz A."/>
            <person name="Richardson P."/>
        </authorList>
    </citation>
    <scope>NUCLEOTIDE SEQUENCE [LARGE SCALE GENOMIC DNA]</scope>
    <source>
        <strain>JH1</strain>
    </source>
</reference>
<comment type="function">
    <text evidence="1">Has nucleoside phosphatase activity towards nucleoside triphosphates and nucleoside diphosphates.</text>
</comment>
<comment type="catalytic activity">
    <reaction evidence="1">
        <text>a ribonucleoside 5'-triphosphate + H2O = a ribonucleoside 5'-diphosphate + phosphate + H(+)</text>
        <dbReference type="Rhea" id="RHEA:23680"/>
        <dbReference type="ChEBI" id="CHEBI:15377"/>
        <dbReference type="ChEBI" id="CHEBI:15378"/>
        <dbReference type="ChEBI" id="CHEBI:43474"/>
        <dbReference type="ChEBI" id="CHEBI:57930"/>
        <dbReference type="ChEBI" id="CHEBI:61557"/>
        <dbReference type="EC" id="3.6.1.15"/>
    </reaction>
</comment>
<comment type="catalytic activity">
    <reaction evidence="1">
        <text>a ribonucleoside 5'-diphosphate + H2O = a ribonucleoside 5'-phosphate + phosphate + H(+)</text>
        <dbReference type="Rhea" id="RHEA:36799"/>
        <dbReference type="ChEBI" id="CHEBI:15377"/>
        <dbReference type="ChEBI" id="CHEBI:15378"/>
        <dbReference type="ChEBI" id="CHEBI:43474"/>
        <dbReference type="ChEBI" id="CHEBI:57930"/>
        <dbReference type="ChEBI" id="CHEBI:58043"/>
        <dbReference type="EC" id="3.6.1.6"/>
    </reaction>
</comment>
<comment type="cofactor">
    <cofactor evidence="1">
        <name>Mg(2+)</name>
        <dbReference type="ChEBI" id="CHEBI:18420"/>
    </cofactor>
</comment>
<comment type="similarity">
    <text evidence="1">Belongs to the Ntdp family.</text>
</comment>
<sequence>MVRESIPKEGENIKIQSYKHDGKIHRVWSETTILKGTDHVVIGGNDHTLVTESDGRTWITREPAIVYFHSEYWFNVICMFREDGIYYYCNLSSPFVCDEEALKYIDYDLDIKVYPNGKYHLLDEDEYEQHMNQMNYPHDIDIILRRNVDILQQWIEQKKGPFAPDFIKVWKERYKKIRQY</sequence>